<evidence type="ECO:0000255" key="1">
    <source>
        <dbReference type="HAMAP-Rule" id="MF_01033"/>
    </source>
</evidence>
<evidence type="ECO:0000305" key="2"/>
<protein>
    <recommendedName>
        <fullName evidence="1">3-isopropylmalate dehydrogenase</fullName>
        <ecNumber evidence="1">1.1.1.85</ecNumber>
    </recommendedName>
    <alternativeName>
        <fullName evidence="1">3-IPM-DH</fullName>
    </alternativeName>
    <alternativeName>
        <fullName evidence="1">Beta-IPM dehydrogenase</fullName>
        <shortName evidence="1">IMDH</shortName>
    </alternativeName>
</protein>
<reference key="1">
    <citation type="journal article" date="2003" name="Nat. Genet.">
        <title>Comparative analysis of the genome sequences of Bordetella pertussis, Bordetella parapertussis and Bordetella bronchiseptica.</title>
        <authorList>
            <person name="Parkhill J."/>
            <person name="Sebaihia M."/>
            <person name="Preston A."/>
            <person name="Murphy L.D."/>
            <person name="Thomson N.R."/>
            <person name="Harris D.E."/>
            <person name="Holden M.T.G."/>
            <person name="Churcher C.M."/>
            <person name="Bentley S.D."/>
            <person name="Mungall K.L."/>
            <person name="Cerdeno-Tarraga A.-M."/>
            <person name="Temple L."/>
            <person name="James K.D."/>
            <person name="Harris B."/>
            <person name="Quail M.A."/>
            <person name="Achtman M."/>
            <person name="Atkin R."/>
            <person name="Baker S."/>
            <person name="Basham D."/>
            <person name="Bason N."/>
            <person name="Cherevach I."/>
            <person name="Chillingworth T."/>
            <person name="Collins M."/>
            <person name="Cronin A."/>
            <person name="Davis P."/>
            <person name="Doggett J."/>
            <person name="Feltwell T."/>
            <person name="Goble A."/>
            <person name="Hamlin N."/>
            <person name="Hauser H."/>
            <person name="Holroyd S."/>
            <person name="Jagels K."/>
            <person name="Leather S."/>
            <person name="Moule S."/>
            <person name="Norberczak H."/>
            <person name="O'Neil S."/>
            <person name="Ormond D."/>
            <person name="Price C."/>
            <person name="Rabbinowitsch E."/>
            <person name="Rutter S."/>
            <person name="Sanders M."/>
            <person name="Saunders D."/>
            <person name="Seeger K."/>
            <person name="Sharp S."/>
            <person name="Simmonds M."/>
            <person name="Skelton J."/>
            <person name="Squares R."/>
            <person name="Squares S."/>
            <person name="Stevens K."/>
            <person name="Unwin L."/>
            <person name="Whitehead S."/>
            <person name="Barrell B.G."/>
            <person name="Maskell D.J."/>
        </authorList>
    </citation>
    <scope>NUCLEOTIDE SEQUENCE [LARGE SCALE GENOMIC DNA]</scope>
    <source>
        <strain>12822 / ATCC BAA-587 / NCTC 13253</strain>
    </source>
</reference>
<gene>
    <name evidence="1" type="primary">leuB</name>
    <name type="ordered locus">BPP1944</name>
</gene>
<proteinExistence type="inferred from homology"/>
<organism>
    <name type="scientific">Bordetella parapertussis (strain 12822 / ATCC BAA-587 / NCTC 13253)</name>
    <dbReference type="NCBI Taxonomy" id="257311"/>
    <lineage>
        <taxon>Bacteria</taxon>
        <taxon>Pseudomonadati</taxon>
        <taxon>Pseudomonadota</taxon>
        <taxon>Betaproteobacteria</taxon>
        <taxon>Burkholderiales</taxon>
        <taxon>Alcaligenaceae</taxon>
        <taxon>Bordetella</taxon>
    </lineage>
</organism>
<feature type="chain" id="PRO_0000083650" description="3-isopropylmalate dehydrogenase">
    <location>
        <begin position="1"/>
        <end position="358"/>
    </location>
</feature>
<feature type="binding site" evidence="1">
    <location>
        <position position="92"/>
    </location>
    <ligand>
        <name>substrate</name>
    </ligand>
</feature>
<feature type="binding site" evidence="1">
    <location>
        <position position="102"/>
    </location>
    <ligand>
        <name>substrate</name>
    </ligand>
</feature>
<feature type="binding site" evidence="1">
    <location>
        <position position="130"/>
    </location>
    <ligand>
        <name>substrate</name>
    </ligand>
</feature>
<feature type="binding site" evidence="1">
    <location>
        <position position="224"/>
    </location>
    <ligand>
        <name>Mg(2+)</name>
        <dbReference type="ChEBI" id="CHEBI:18420"/>
    </ligand>
</feature>
<feature type="binding site" evidence="1">
    <location>
        <position position="224"/>
    </location>
    <ligand>
        <name>substrate</name>
    </ligand>
</feature>
<feature type="binding site" evidence="1">
    <location>
        <position position="248"/>
    </location>
    <ligand>
        <name>Mg(2+)</name>
        <dbReference type="ChEBI" id="CHEBI:18420"/>
    </ligand>
</feature>
<feature type="binding site" evidence="1">
    <location>
        <position position="252"/>
    </location>
    <ligand>
        <name>Mg(2+)</name>
        <dbReference type="ChEBI" id="CHEBI:18420"/>
    </ligand>
</feature>
<feature type="binding site" evidence="1">
    <location>
        <begin position="282"/>
        <end position="294"/>
    </location>
    <ligand>
        <name>NAD(+)</name>
        <dbReference type="ChEBI" id="CHEBI:57540"/>
    </ligand>
</feature>
<feature type="site" description="Important for catalysis" evidence="1">
    <location>
        <position position="137"/>
    </location>
</feature>
<feature type="site" description="Important for catalysis" evidence="1">
    <location>
        <position position="192"/>
    </location>
</feature>
<comment type="function">
    <text evidence="1">Catalyzes the oxidation of 3-carboxy-2-hydroxy-4-methylpentanoate (3-isopropylmalate) to 3-carboxy-4-methyl-2-oxopentanoate. The product decarboxylates to 4-methyl-2 oxopentanoate.</text>
</comment>
<comment type="catalytic activity">
    <reaction evidence="1">
        <text>(2R,3S)-3-isopropylmalate + NAD(+) = 4-methyl-2-oxopentanoate + CO2 + NADH</text>
        <dbReference type="Rhea" id="RHEA:32271"/>
        <dbReference type="ChEBI" id="CHEBI:16526"/>
        <dbReference type="ChEBI" id="CHEBI:17865"/>
        <dbReference type="ChEBI" id="CHEBI:35121"/>
        <dbReference type="ChEBI" id="CHEBI:57540"/>
        <dbReference type="ChEBI" id="CHEBI:57945"/>
        <dbReference type="EC" id="1.1.1.85"/>
    </reaction>
</comment>
<comment type="cofactor">
    <cofactor evidence="1">
        <name>Mg(2+)</name>
        <dbReference type="ChEBI" id="CHEBI:18420"/>
    </cofactor>
    <cofactor evidence="1">
        <name>Mn(2+)</name>
        <dbReference type="ChEBI" id="CHEBI:29035"/>
    </cofactor>
    <text evidence="1">Binds 1 Mg(2+) or Mn(2+) ion per subunit.</text>
</comment>
<comment type="pathway">
    <text evidence="1">Amino-acid biosynthesis; L-leucine biosynthesis; L-leucine from 3-methyl-2-oxobutanoate: step 3/4.</text>
</comment>
<comment type="subunit">
    <text evidence="1">Homodimer.</text>
</comment>
<comment type="subcellular location">
    <subcellularLocation>
        <location evidence="1">Cytoplasm</location>
    </subcellularLocation>
</comment>
<comment type="similarity">
    <text evidence="1">Belongs to the isocitrate and isopropylmalate dehydrogenases family. LeuB type 1 subfamily.</text>
</comment>
<comment type="sequence caution" evidence="2">
    <conflict type="erroneous initiation">
        <sequence resource="EMBL-CDS" id="CAE37244"/>
    </conflict>
</comment>
<dbReference type="EC" id="1.1.1.85" evidence="1"/>
<dbReference type="EMBL" id="BX640428">
    <property type="protein sequence ID" value="CAE37244.1"/>
    <property type="status" value="ALT_INIT"/>
    <property type="molecule type" value="Genomic_DNA"/>
</dbReference>
<dbReference type="RefSeq" id="WP_003812648.1">
    <property type="nucleotide sequence ID" value="NC_002928.3"/>
</dbReference>
<dbReference type="SMR" id="Q7W929"/>
<dbReference type="GeneID" id="93203716"/>
<dbReference type="KEGG" id="bpa:BPP1944"/>
<dbReference type="HOGENOM" id="CLU_031953_0_3_4"/>
<dbReference type="UniPathway" id="UPA00048">
    <property type="reaction ID" value="UER00072"/>
</dbReference>
<dbReference type="Proteomes" id="UP000001421">
    <property type="component" value="Chromosome"/>
</dbReference>
<dbReference type="GO" id="GO:0005829">
    <property type="term" value="C:cytosol"/>
    <property type="evidence" value="ECO:0007669"/>
    <property type="project" value="TreeGrafter"/>
</dbReference>
<dbReference type="GO" id="GO:0003862">
    <property type="term" value="F:3-isopropylmalate dehydrogenase activity"/>
    <property type="evidence" value="ECO:0007669"/>
    <property type="project" value="UniProtKB-UniRule"/>
</dbReference>
<dbReference type="GO" id="GO:0000287">
    <property type="term" value="F:magnesium ion binding"/>
    <property type="evidence" value="ECO:0007669"/>
    <property type="project" value="InterPro"/>
</dbReference>
<dbReference type="GO" id="GO:0051287">
    <property type="term" value="F:NAD binding"/>
    <property type="evidence" value="ECO:0007669"/>
    <property type="project" value="InterPro"/>
</dbReference>
<dbReference type="GO" id="GO:0009098">
    <property type="term" value="P:L-leucine biosynthetic process"/>
    <property type="evidence" value="ECO:0007669"/>
    <property type="project" value="UniProtKB-UniRule"/>
</dbReference>
<dbReference type="FunFam" id="3.40.718.10:FF:000028">
    <property type="entry name" value="3-isopropylmalate dehydrogenase"/>
    <property type="match status" value="1"/>
</dbReference>
<dbReference type="Gene3D" id="3.40.718.10">
    <property type="entry name" value="Isopropylmalate Dehydrogenase"/>
    <property type="match status" value="1"/>
</dbReference>
<dbReference type="HAMAP" id="MF_01033">
    <property type="entry name" value="LeuB_type1"/>
    <property type="match status" value="1"/>
</dbReference>
<dbReference type="InterPro" id="IPR019818">
    <property type="entry name" value="IsoCit/isopropylmalate_DH_CS"/>
</dbReference>
<dbReference type="InterPro" id="IPR024084">
    <property type="entry name" value="IsoPropMal-DH-like_dom"/>
</dbReference>
<dbReference type="InterPro" id="IPR004429">
    <property type="entry name" value="Isopropylmalate_DH"/>
</dbReference>
<dbReference type="NCBIfam" id="TIGR00169">
    <property type="entry name" value="leuB"/>
    <property type="match status" value="1"/>
</dbReference>
<dbReference type="PANTHER" id="PTHR42979">
    <property type="entry name" value="3-ISOPROPYLMALATE DEHYDROGENASE"/>
    <property type="match status" value="1"/>
</dbReference>
<dbReference type="PANTHER" id="PTHR42979:SF1">
    <property type="entry name" value="3-ISOPROPYLMALATE DEHYDROGENASE"/>
    <property type="match status" value="1"/>
</dbReference>
<dbReference type="Pfam" id="PF00180">
    <property type="entry name" value="Iso_dh"/>
    <property type="match status" value="1"/>
</dbReference>
<dbReference type="SMART" id="SM01329">
    <property type="entry name" value="Iso_dh"/>
    <property type="match status" value="1"/>
</dbReference>
<dbReference type="SUPFAM" id="SSF53659">
    <property type="entry name" value="Isocitrate/Isopropylmalate dehydrogenase-like"/>
    <property type="match status" value="1"/>
</dbReference>
<dbReference type="PROSITE" id="PS00470">
    <property type="entry name" value="IDH_IMDH"/>
    <property type="match status" value="1"/>
</dbReference>
<keyword id="KW-0028">Amino-acid biosynthesis</keyword>
<keyword id="KW-0100">Branched-chain amino acid biosynthesis</keyword>
<keyword id="KW-0963">Cytoplasm</keyword>
<keyword id="KW-0432">Leucine biosynthesis</keyword>
<keyword id="KW-0460">Magnesium</keyword>
<keyword id="KW-0464">Manganese</keyword>
<keyword id="KW-0479">Metal-binding</keyword>
<keyword id="KW-0520">NAD</keyword>
<keyword id="KW-0560">Oxidoreductase</keyword>
<accession>Q7W929</accession>
<name>LEU3_BORPA</name>
<sequence>MTHQIAVLPGDGIGPEIVEQAERVLKALDLPLELRQAPVGGAAFDQFEHPLPPATLELAQGSHAVLFGAVGDWKYDTLPREFRPEQAILGLRKALGLFANLRPAILYPELASASSLKPEIVSGLDILIIRELTGDIYFGTPRGVRTAADGAFAGEREGYDTMRYAESEVRRIARIGFESARKRNKKLCSVDKANVLETSQFWRDLVIEVSRDYPDVELSHMYVDNAAMQLVRNPRQFDVIVTGNLFGDILSDEAAMLTGSIGMLPSASLNAAGQGLYEPSHGSAPDIAGQGIANPLATILSAAMLLRYSLNLAPQADRVEAAVRKVLADGLRTADIHEAGTTKVSTSQMGDAVLKALG</sequence>